<name>TMED8_HUMAN</name>
<reference key="1">
    <citation type="journal article" date="2004" name="Oncogene">
        <title>Suppression subtractive hybridization and expression profiling identifies a unique set of genes overexpressed in non-small-cell lung cancer.</title>
        <authorList>
            <person name="Petroziello J."/>
            <person name="Yamane A."/>
            <person name="Westendorf L."/>
            <person name="Thompson M."/>
            <person name="McDonagh C."/>
            <person name="Cerveny C."/>
            <person name="Law C.-L."/>
            <person name="Wahl A."/>
            <person name="Carter P."/>
        </authorList>
    </citation>
    <scope>NUCLEOTIDE SEQUENCE [MRNA]</scope>
</reference>
<reference key="2">
    <citation type="journal article" date="2004" name="Nat. Genet.">
        <title>Complete sequencing and characterization of 21,243 full-length human cDNAs.</title>
        <authorList>
            <person name="Ota T."/>
            <person name="Suzuki Y."/>
            <person name="Nishikawa T."/>
            <person name="Otsuki T."/>
            <person name="Sugiyama T."/>
            <person name="Irie R."/>
            <person name="Wakamatsu A."/>
            <person name="Hayashi K."/>
            <person name="Sato H."/>
            <person name="Nagai K."/>
            <person name="Kimura K."/>
            <person name="Makita H."/>
            <person name="Sekine M."/>
            <person name="Obayashi M."/>
            <person name="Nishi T."/>
            <person name="Shibahara T."/>
            <person name="Tanaka T."/>
            <person name="Ishii S."/>
            <person name="Yamamoto J."/>
            <person name="Saito K."/>
            <person name="Kawai Y."/>
            <person name="Isono Y."/>
            <person name="Nakamura Y."/>
            <person name="Nagahari K."/>
            <person name="Murakami K."/>
            <person name="Yasuda T."/>
            <person name="Iwayanagi T."/>
            <person name="Wagatsuma M."/>
            <person name="Shiratori A."/>
            <person name="Sudo H."/>
            <person name="Hosoiri T."/>
            <person name="Kaku Y."/>
            <person name="Kodaira H."/>
            <person name="Kondo H."/>
            <person name="Sugawara M."/>
            <person name="Takahashi M."/>
            <person name="Kanda K."/>
            <person name="Yokoi T."/>
            <person name="Furuya T."/>
            <person name="Kikkawa E."/>
            <person name="Omura Y."/>
            <person name="Abe K."/>
            <person name="Kamihara K."/>
            <person name="Katsuta N."/>
            <person name="Sato K."/>
            <person name="Tanikawa M."/>
            <person name="Yamazaki M."/>
            <person name="Ninomiya K."/>
            <person name="Ishibashi T."/>
            <person name="Yamashita H."/>
            <person name="Murakawa K."/>
            <person name="Fujimori K."/>
            <person name="Tanai H."/>
            <person name="Kimata M."/>
            <person name="Watanabe M."/>
            <person name="Hiraoka S."/>
            <person name="Chiba Y."/>
            <person name="Ishida S."/>
            <person name="Ono Y."/>
            <person name="Takiguchi S."/>
            <person name="Watanabe S."/>
            <person name="Yosida M."/>
            <person name="Hotuta T."/>
            <person name="Kusano J."/>
            <person name="Kanehori K."/>
            <person name="Takahashi-Fujii A."/>
            <person name="Hara H."/>
            <person name="Tanase T.-O."/>
            <person name="Nomura Y."/>
            <person name="Togiya S."/>
            <person name="Komai F."/>
            <person name="Hara R."/>
            <person name="Takeuchi K."/>
            <person name="Arita M."/>
            <person name="Imose N."/>
            <person name="Musashino K."/>
            <person name="Yuuki H."/>
            <person name="Oshima A."/>
            <person name="Sasaki N."/>
            <person name="Aotsuka S."/>
            <person name="Yoshikawa Y."/>
            <person name="Matsunawa H."/>
            <person name="Ichihara T."/>
            <person name="Shiohata N."/>
            <person name="Sano S."/>
            <person name="Moriya S."/>
            <person name="Momiyama H."/>
            <person name="Satoh N."/>
            <person name="Takami S."/>
            <person name="Terashima Y."/>
            <person name="Suzuki O."/>
            <person name="Nakagawa S."/>
            <person name="Senoh A."/>
            <person name="Mizoguchi H."/>
            <person name="Goto Y."/>
            <person name="Shimizu F."/>
            <person name="Wakebe H."/>
            <person name="Hishigaki H."/>
            <person name="Watanabe T."/>
            <person name="Sugiyama A."/>
            <person name="Takemoto M."/>
            <person name="Kawakami B."/>
            <person name="Yamazaki M."/>
            <person name="Watanabe K."/>
            <person name="Kumagai A."/>
            <person name="Itakura S."/>
            <person name="Fukuzumi Y."/>
            <person name="Fujimori Y."/>
            <person name="Komiyama M."/>
            <person name="Tashiro H."/>
            <person name="Tanigami A."/>
            <person name="Fujiwara T."/>
            <person name="Ono T."/>
            <person name="Yamada K."/>
            <person name="Fujii Y."/>
            <person name="Ozaki K."/>
            <person name="Hirao M."/>
            <person name="Ohmori Y."/>
            <person name="Kawabata A."/>
            <person name="Hikiji T."/>
            <person name="Kobatake N."/>
            <person name="Inagaki H."/>
            <person name="Ikema Y."/>
            <person name="Okamoto S."/>
            <person name="Okitani R."/>
            <person name="Kawakami T."/>
            <person name="Noguchi S."/>
            <person name="Itoh T."/>
            <person name="Shigeta K."/>
            <person name="Senba T."/>
            <person name="Matsumura K."/>
            <person name="Nakajima Y."/>
            <person name="Mizuno T."/>
            <person name="Morinaga M."/>
            <person name="Sasaki M."/>
            <person name="Togashi T."/>
            <person name="Oyama M."/>
            <person name="Hata H."/>
            <person name="Watanabe M."/>
            <person name="Komatsu T."/>
            <person name="Mizushima-Sugano J."/>
            <person name="Satoh T."/>
            <person name="Shirai Y."/>
            <person name="Takahashi Y."/>
            <person name="Nakagawa K."/>
            <person name="Okumura K."/>
            <person name="Nagase T."/>
            <person name="Nomura N."/>
            <person name="Kikuchi H."/>
            <person name="Masuho Y."/>
            <person name="Yamashita R."/>
            <person name="Nakai K."/>
            <person name="Yada T."/>
            <person name="Nakamura Y."/>
            <person name="Ohara O."/>
            <person name="Isogai T."/>
            <person name="Sugano S."/>
        </authorList>
    </citation>
    <scope>NUCLEOTIDE SEQUENCE [LARGE SCALE MRNA]</scope>
    <source>
        <tissue>Brain</tissue>
    </source>
</reference>
<reference key="3">
    <citation type="journal article" date="2003" name="Nature">
        <title>The DNA sequence and analysis of human chromosome 14.</title>
        <authorList>
            <person name="Heilig R."/>
            <person name="Eckenberg R."/>
            <person name="Petit J.-L."/>
            <person name="Fonknechten N."/>
            <person name="Da Silva C."/>
            <person name="Cattolico L."/>
            <person name="Levy M."/>
            <person name="Barbe V."/>
            <person name="De Berardinis V."/>
            <person name="Ureta-Vidal A."/>
            <person name="Pelletier E."/>
            <person name="Vico V."/>
            <person name="Anthouard V."/>
            <person name="Rowen L."/>
            <person name="Madan A."/>
            <person name="Qin S."/>
            <person name="Sun H."/>
            <person name="Du H."/>
            <person name="Pepin K."/>
            <person name="Artiguenave F."/>
            <person name="Robert C."/>
            <person name="Cruaud C."/>
            <person name="Bruels T."/>
            <person name="Jaillon O."/>
            <person name="Friedlander L."/>
            <person name="Samson G."/>
            <person name="Brottier P."/>
            <person name="Cure S."/>
            <person name="Segurens B."/>
            <person name="Aniere F."/>
            <person name="Samain S."/>
            <person name="Crespeau H."/>
            <person name="Abbasi N."/>
            <person name="Aiach N."/>
            <person name="Boscus D."/>
            <person name="Dickhoff R."/>
            <person name="Dors M."/>
            <person name="Dubois I."/>
            <person name="Friedman C."/>
            <person name="Gouyvenoux M."/>
            <person name="James R."/>
            <person name="Madan A."/>
            <person name="Mairey-Estrada B."/>
            <person name="Mangenot S."/>
            <person name="Martins N."/>
            <person name="Menard M."/>
            <person name="Oztas S."/>
            <person name="Ratcliffe A."/>
            <person name="Shaffer T."/>
            <person name="Trask B."/>
            <person name="Vacherie B."/>
            <person name="Bellemere C."/>
            <person name="Belser C."/>
            <person name="Besnard-Gonnet M."/>
            <person name="Bartol-Mavel D."/>
            <person name="Boutard M."/>
            <person name="Briez-Silla S."/>
            <person name="Combette S."/>
            <person name="Dufosse-Laurent V."/>
            <person name="Ferron C."/>
            <person name="Lechaplais C."/>
            <person name="Louesse C."/>
            <person name="Muselet D."/>
            <person name="Magdelenat G."/>
            <person name="Pateau E."/>
            <person name="Petit E."/>
            <person name="Sirvain-Trukniewicz P."/>
            <person name="Trybou A."/>
            <person name="Vega-Czarny N."/>
            <person name="Bataille E."/>
            <person name="Bluet E."/>
            <person name="Bordelais I."/>
            <person name="Dubois M."/>
            <person name="Dumont C."/>
            <person name="Guerin T."/>
            <person name="Haffray S."/>
            <person name="Hammadi R."/>
            <person name="Muanga J."/>
            <person name="Pellouin V."/>
            <person name="Robert D."/>
            <person name="Wunderle E."/>
            <person name="Gauguet G."/>
            <person name="Roy A."/>
            <person name="Sainte-Marthe L."/>
            <person name="Verdier J."/>
            <person name="Verdier-Discala C."/>
            <person name="Hillier L.W."/>
            <person name="Fulton L."/>
            <person name="McPherson J."/>
            <person name="Matsuda F."/>
            <person name="Wilson R."/>
            <person name="Scarpelli C."/>
            <person name="Gyapay G."/>
            <person name="Wincker P."/>
            <person name="Saurin W."/>
            <person name="Quetier F."/>
            <person name="Waterston R."/>
            <person name="Hood L."/>
            <person name="Weissenbach J."/>
        </authorList>
    </citation>
    <scope>NUCLEOTIDE SEQUENCE [LARGE SCALE GENOMIC DNA]</scope>
</reference>
<reference key="4">
    <citation type="journal article" date="2004" name="Genome Res.">
        <title>The status, quality, and expansion of the NIH full-length cDNA project: the Mammalian Gene Collection (MGC).</title>
        <authorList>
            <consortium name="The MGC Project Team"/>
        </authorList>
    </citation>
    <scope>NUCLEOTIDE SEQUENCE [LARGE SCALE MRNA]</scope>
    <source>
        <tissue>Brain</tissue>
    </source>
</reference>
<reference key="5">
    <citation type="journal article" date="2009" name="Science">
        <title>Lysine acetylation targets protein complexes and co-regulates major cellular functions.</title>
        <authorList>
            <person name="Choudhary C."/>
            <person name="Kumar C."/>
            <person name="Gnad F."/>
            <person name="Nielsen M.L."/>
            <person name="Rehman M."/>
            <person name="Walther T.C."/>
            <person name="Olsen J.V."/>
            <person name="Mann M."/>
        </authorList>
    </citation>
    <scope>ACETYLATION [LARGE SCALE ANALYSIS] AT LYS-169</scope>
    <scope>IDENTIFICATION BY MASS SPECTROMETRY [LARGE SCALE ANALYSIS]</scope>
</reference>
<reference key="6">
    <citation type="journal article" date="2011" name="BMC Syst. Biol.">
        <title>Initial characterization of the human central proteome.</title>
        <authorList>
            <person name="Burkard T.R."/>
            <person name="Planyavsky M."/>
            <person name="Kaupe I."/>
            <person name="Breitwieser F.P."/>
            <person name="Buerckstuemmer T."/>
            <person name="Bennett K.L."/>
            <person name="Superti-Furga G."/>
            <person name="Colinge J."/>
        </authorList>
    </citation>
    <scope>IDENTIFICATION BY MASS SPECTROMETRY [LARGE SCALE ANALYSIS]</scope>
</reference>
<protein>
    <recommendedName>
        <fullName>Protein TMED8</fullName>
    </recommendedName>
</protein>
<keyword id="KW-0007">Acetylation</keyword>
<keyword id="KW-1267">Proteomics identification</keyword>
<keyword id="KW-1185">Reference proteome</keyword>
<proteinExistence type="evidence at protein level"/>
<organism>
    <name type="scientific">Homo sapiens</name>
    <name type="common">Human</name>
    <dbReference type="NCBI Taxonomy" id="9606"/>
    <lineage>
        <taxon>Eukaryota</taxon>
        <taxon>Metazoa</taxon>
        <taxon>Chordata</taxon>
        <taxon>Craniata</taxon>
        <taxon>Vertebrata</taxon>
        <taxon>Euteleostomi</taxon>
        <taxon>Mammalia</taxon>
        <taxon>Eutheria</taxon>
        <taxon>Euarchontoglires</taxon>
        <taxon>Primates</taxon>
        <taxon>Haplorrhini</taxon>
        <taxon>Catarrhini</taxon>
        <taxon>Hominidae</taxon>
        <taxon>Homo</taxon>
    </lineage>
</organism>
<gene>
    <name type="primary">TMED8</name>
    <name type="synonym">FAM15B</name>
    <name type="ORF">L10</name>
</gene>
<accession>Q6PL24</accession>
<accession>B3KTI6</accession>
<accession>Q3MJB0</accession>
<accession>Q9P1V9</accession>
<dbReference type="EMBL" id="AY598329">
    <property type="protein sequence ID" value="AAT06740.1"/>
    <property type="molecule type" value="mRNA"/>
</dbReference>
<dbReference type="EMBL" id="AK095650">
    <property type="protein sequence ID" value="BAG53098.1"/>
    <property type="molecule type" value="mRNA"/>
</dbReference>
<dbReference type="EMBL" id="AC007954">
    <property type="protein sequence ID" value="AAF62560.1"/>
    <property type="status" value="ALT_SEQ"/>
    <property type="molecule type" value="Genomic_DNA"/>
</dbReference>
<dbReference type="EMBL" id="BC101510">
    <property type="protein sequence ID" value="AAI01511.1"/>
    <property type="molecule type" value="mRNA"/>
</dbReference>
<dbReference type="CCDS" id="CCDS32125.1"/>
<dbReference type="RefSeq" id="NP_001333062.1">
    <property type="nucleotide sequence ID" value="NM_001346133.1"/>
</dbReference>
<dbReference type="RefSeq" id="NP_001333063.1">
    <property type="nucleotide sequence ID" value="NM_001346134.1"/>
</dbReference>
<dbReference type="RefSeq" id="NP_998766.1">
    <property type="nucleotide sequence ID" value="NM_213601.3"/>
</dbReference>
<dbReference type="SMR" id="Q6PL24"/>
<dbReference type="BioGRID" id="129608">
    <property type="interactions" value="73"/>
</dbReference>
<dbReference type="FunCoup" id="Q6PL24">
    <property type="interactions" value="418"/>
</dbReference>
<dbReference type="IntAct" id="Q6PL24">
    <property type="interactions" value="56"/>
</dbReference>
<dbReference type="MINT" id="Q6PL24"/>
<dbReference type="STRING" id="9606.ENSP00000216468"/>
<dbReference type="iPTMnet" id="Q6PL24"/>
<dbReference type="MetOSite" id="Q6PL24"/>
<dbReference type="PhosphoSitePlus" id="Q6PL24"/>
<dbReference type="BioMuta" id="TMED8"/>
<dbReference type="DMDM" id="62287887"/>
<dbReference type="jPOST" id="Q6PL24"/>
<dbReference type="MassIVE" id="Q6PL24"/>
<dbReference type="PaxDb" id="9606-ENSP00000216468"/>
<dbReference type="PeptideAtlas" id="Q6PL24"/>
<dbReference type="ProteomicsDB" id="67250"/>
<dbReference type="Pumba" id="Q6PL24"/>
<dbReference type="Antibodypedia" id="27">
    <property type="antibodies" value="91 antibodies from 18 providers"/>
</dbReference>
<dbReference type="DNASU" id="283578"/>
<dbReference type="Ensembl" id="ENST00000216468.8">
    <property type="protein sequence ID" value="ENSP00000216468.7"/>
    <property type="gene ID" value="ENSG00000100580.8"/>
</dbReference>
<dbReference type="GeneID" id="283578"/>
<dbReference type="KEGG" id="hsa:283578"/>
<dbReference type="MANE-Select" id="ENST00000216468.8">
    <property type="protein sequence ID" value="ENSP00000216468.7"/>
    <property type="RefSeq nucleotide sequence ID" value="NM_213601.3"/>
    <property type="RefSeq protein sequence ID" value="NP_998766.1"/>
</dbReference>
<dbReference type="UCSC" id="uc001xto.2">
    <property type="organism name" value="human"/>
</dbReference>
<dbReference type="AGR" id="HGNC:18633"/>
<dbReference type="CTD" id="283578"/>
<dbReference type="DisGeNET" id="283578"/>
<dbReference type="GeneCards" id="TMED8"/>
<dbReference type="HGNC" id="HGNC:18633">
    <property type="gene designation" value="TMED8"/>
</dbReference>
<dbReference type="HPA" id="ENSG00000100580">
    <property type="expression patterns" value="Low tissue specificity"/>
</dbReference>
<dbReference type="neXtProt" id="NX_Q6PL24"/>
<dbReference type="OpenTargets" id="ENSG00000100580"/>
<dbReference type="PharmGKB" id="PA134948632"/>
<dbReference type="VEuPathDB" id="HostDB:ENSG00000100580"/>
<dbReference type="eggNOG" id="KOG3878">
    <property type="taxonomic scope" value="Eukaryota"/>
</dbReference>
<dbReference type="GeneTree" id="ENSGT00530000063651"/>
<dbReference type="HOGENOM" id="CLU_053155_0_0_1"/>
<dbReference type="InParanoid" id="Q6PL24"/>
<dbReference type="OMA" id="KRLFWEF"/>
<dbReference type="OrthoDB" id="5839451at2759"/>
<dbReference type="PAN-GO" id="Q6PL24">
    <property type="GO annotations" value="0 GO annotations based on evolutionary models"/>
</dbReference>
<dbReference type="PhylomeDB" id="Q6PL24"/>
<dbReference type="TreeFam" id="TF321667"/>
<dbReference type="PathwayCommons" id="Q6PL24"/>
<dbReference type="SignaLink" id="Q6PL24"/>
<dbReference type="BioGRID-ORCS" id="283578">
    <property type="hits" value="236 hits in 1155 CRISPR screens"/>
</dbReference>
<dbReference type="ChiTaRS" id="TMED8">
    <property type="organism name" value="human"/>
</dbReference>
<dbReference type="GenomeRNAi" id="283578"/>
<dbReference type="Pharos" id="Q6PL24">
    <property type="development level" value="Tdark"/>
</dbReference>
<dbReference type="PRO" id="PR:Q6PL24"/>
<dbReference type="Proteomes" id="UP000005640">
    <property type="component" value="Chromosome 14"/>
</dbReference>
<dbReference type="RNAct" id="Q6PL24">
    <property type="molecule type" value="protein"/>
</dbReference>
<dbReference type="Bgee" id="ENSG00000100580">
    <property type="expression patterns" value="Expressed in endothelial cell and 192 other cell types or tissues"/>
</dbReference>
<dbReference type="Gene3D" id="2.60.120.680">
    <property type="entry name" value="GOLD domain"/>
    <property type="match status" value="1"/>
</dbReference>
<dbReference type="InterPro" id="IPR009038">
    <property type="entry name" value="GOLD_dom"/>
</dbReference>
<dbReference type="InterPro" id="IPR036598">
    <property type="entry name" value="GOLD_dom_sf"/>
</dbReference>
<dbReference type="InterPro" id="IPR052269">
    <property type="entry name" value="Golgi-PI4KB_interaction"/>
</dbReference>
<dbReference type="PANTHER" id="PTHR22973">
    <property type="entry name" value="LD35087P"/>
    <property type="match status" value="1"/>
</dbReference>
<dbReference type="PANTHER" id="PTHR22973:SF3">
    <property type="entry name" value="PROTEIN TMED8"/>
    <property type="match status" value="1"/>
</dbReference>
<dbReference type="Pfam" id="PF13897">
    <property type="entry name" value="GOLD_2"/>
    <property type="match status" value="1"/>
</dbReference>
<dbReference type="SUPFAM" id="SSF101576">
    <property type="entry name" value="Supernatant protein factor (SPF), C-terminal domain"/>
    <property type="match status" value="1"/>
</dbReference>
<dbReference type="PROSITE" id="PS50866">
    <property type="entry name" value="GOLD"/>
    <property type="match status" value="1"/>
</dbReference>
<feature type="chain" id="PRO_0000055638" description="Protein TMED8">
    <location>
        <begin position="1"/>
        <end position="325"/>
    </location>
</feature>
<feature type="domain" description="GOLD" evidence="1">
    <location>
        <begin position="159"/>
        <end position="323"/>
    </location>
</feature>
<feature type="region of interest" description="Disordered" evidence="2">
    <location>
        <begin position="1"/>
        <end position="78"/>
    </location>
</feature>
<feature type="region of interest" description="Disordered" evidence="2">
    <location>
        <begin position="232"/>
        <end position="267"/>
    </location>
</feature>
<feature type="compositionally biased region" description="Acidic residues" evidence="2">
    <location>
        <begin position="238"/>
        <end position="254"/>
    </location>
</feature>
<feature type="modified residue" description="N6-acetyllysine" evidence="4">
    <location>
        <position position="169"/>
    </location>
</feature>
<feature type="sequence variant" id="VAR_049112" description="In dbSNP:rs3742737.">
    <original>Q</original>
    <variation>K</variation>
    <location>
        <position position="5"/>
    </location>
</feature>
<sequence length="325" mass="35740">MSDLQAAEGPGSWSPTARPGSAGGVGDCQGVEGSQAAASENEDLENKDTSLLASATDPEPCSSPHRPQMVSPVSKDATEDLRKATGPLEAQALVKQDLLPADQAQVLNEMAKYQVPQRSGDIVMIQSEHTGAIDVLSADLESADLLGDHRKVSPPLMAPPCIWTFAKVKEFKSKLGKEKNSRLVVKRGEVVTIRVPTHPEGKRVCWEFATDDYDIGFGVYFDWTPVTSTDITVQVSDSSDDEDEEEEEEEEIEEPVPAGDVERGSRSSLRGRYGEVMPVYRRDSHRDVQAGSHDYPGEGIYLLKFDNSYSLLRNKTLYFHIYYTS</sequence>
<comment type="interaction">
    <interactant intactId="EBI-11603430">
        <id>Q6PL24</id>
    </interactant>
    <interactant intactId="EBI-3921528">
        <id>Q96IZ2</id>
        <label>ADTRP</label>
    </interactant>
    <organismsDiffer>false</organismsDiffer>
    <experiments>3</experiments>
</comment>
<comment type="interaction">
    <interactant intactId="EBI-11603430">
        <id>Q6PL24</id>
    </interactant>
    <interactant intactId="EBI-3866830">
        <id>Q86SJ2</id>
        <label>AMIGO2</label>
    </interactant>
    <organismsDiffer>false</organismsDiffer>
    <experiments>3</experiments>
</comment>
<comment type="interaction">
    <interactant intactId="EBI-11603430">
        <id>Q6PL24</id>
    </interactant>
    <interactant intactId="EBI-4290634">
        <id>Q9BQE5</id>
        <label>APOL2</label>
    </interactant>
    <organismsDiffer>false</organismsDiffer>
    <experiments>3</experiments>
</comment>
<comment type="interaction">
    <interactant intactId="EBI-11603430">
        <id>Q6PL24</id>
    </interactant>
    <interactant intactId="EBI-714543">
        <id>Q15041</id>
        <label>ARL6IP1</label>
    </interactant>
    <organismsDiffer>false</organismsDiffer>
    <experiments>3</experiments>
</comment>
<comment type="interaction">
    <interactant intactId="EBI-11603430">
        <id>Q6PL24</id>
    </interactant>
    <interactant intactId="EBI-13381098">
        <id>Q8IYJ2-2</id>
        <label>C10orf67</label>
    </interactant>
    <organismsDiffer>false</organismsDiffer>
    <experiments>3</experiments>
</comment>
<comment type="interaction">
    <interactant intactId="EBI-11603430">
        <id>Q6PL24</id>
    </interactant>
    <interactant intactId="EBI-752069">
        <id>Q9H5X1</id>
        <label>CIAO2A</label>
    </interactant>
    <organismsDiffer>false</organismsDiffer>
    <experiments>6</experiments>
</comment>
<comment type="interaction">
    <interactant intactId="EBI-11603430">
        <id>Q6PL24</id>
    </interactant>
    <interactant intactId="EBI-11522780">
        <id>Q96DZ9-2</id>
        <label>CMTM5</label>
    </interactant>
    <organismsDiffer>false</organismsDiffer>
    <experiments>3</experiments>
</comment>
<comment type="interaction">
    <interactant intactId="EBI-11603430">
        <id>Q6PL24</id>
    </interactant>
    <interactant intactId="EBI-1054315">
        <id>Q9NX76</id>
        <label>CMTM6</label>
    </interactant>
    <organismsDiffer>false</organismsDiffer>
    <experiments>3</experiments>
</comment>
<comment type="interaction">
    <interactant intactId="EBI-11603430">
        <id>Q6PL24</id>
    </interactant>
    <interactant intactId="EBI-12873482">
        <id>Q8N8Q1</id>
        <label>CYB561D1</label>
    </interactant>
    <organismsDiffer>false</organismsDiffer>
    <experiments>3</experiments>
</comment>
<comment type="interaction">
    <interactant intactId="EBI-11603430">
        <id>Q6PL24</id>
    </interactant>
    <interactant intactId="EBI-23712762">
        <id>Q9H1M3</id>
        <label>DEFB129</label>
    </interactant>
    <organismsDiffer>false</organismsDiffer>
    <experiments>3</experiments>
</comment>
<comment type="interaction">
    <interactant intactId="EBI-11603430">
        <id>Q6PL24</id>
    </interactant>
    <interactant intactId="EBI-398977">
        <id>Q9BUN8</id>
        <label>DERL1</label>
    </interactant>
    <organismsDiffer>false</organismsDiffer>
    <experiments>3</experiments>
</comment>
<comment type="interaction">
    <interactant intactId="EBI-11603430">
        <id>Q6PL24</id>
    </interactant>
    <interactant intactId="EBI-12831978">
        <id>Q6ZPD8</id>
        <label>DGAT2L6</label>
    </interactant>
    <organismsDiffer>false</organismsDiffer>
    <experiments>3</experiments>
</comment>
<comment type="interaction">
    <interactant intactId="EBI-11603430">
        <id>Q6PL24</id>
    </interactant>
    <interactant intactId="EBI-2339413">
        <id>O14681</id>
        <label>EI24</label>
    </interactant>
    <organismsDiffer>false</organismsDiffer>
    <experiments>3</experiments>
</comment>
<comment type="interaction">
    <interactant intactId="EBI-11603430">
        <id>Q6PL24</id>
    </interactant>
    <interactant intactId="EBI-10294329">
        <id>Q99525</id>
        <label>H4C7</label>
    </interactant>
    <organismsDiffer>false</organismsDiffer>
    <experiments>3</experiments>
</comment>
<comment type="interaction">
    <interactant intactId="EBI-11603430">
        <id>Q6PL24</id>
    </interactant>
    <interactant intactId="EBI-723416">
        <id>Q15012</id>
        <label>LAPTM4A</label>
    </interactant>
    <organismsDiffer>false</organismsDiffer>
    <experiments>3</experiments>
</comment>
<comment type="interaction">
    <interactant intactId="EBI-11603430">
        <id>Q6PL24</id>
    </interactant>
    <interactant intactId="EBI-722444">
        <id>P21741</id>
        <label>MDK</label>
    </interactant>
    <organismsDiffer>false</organismsDiffer>
    <experiments>3</experiments>
</comment>
<comment type="interaction">
    <interactant intactId="EBI-11603430">
        <id>Q6PL24</id>
    </interactant>
    <interactant intactId="EBI-6163737">
        <id>Q8N4V1</id>
        <label>MMGT1</label>
    </interactant>
    <organismsDiffer>false</organismsDiffer>
    <experiments>3</experiments>
</comment>
<comment type="interaction">
    <interactant intactId="EBI-11603430">
        <id>Q6PL24</id>
    </interactant>
    <interactant intactId="EBI-912501">
        <id>Q8IXM3</id>
        <label>MRPL41</label>
    </interactant>
    <organismsDiffer>false</organismsDiffer>
    <experiments>3</experiments>
</comment>
<comment type="interaction">
    <interactant intactId="EBI-11603430">
        <id>Q6PL24</id>
    </interactant>
    <interactant intactId="EBI-750085">
        <id>Q9Y676</id>
        <label>MRPS18B</label>
    </interactant>
    <organismsDiffer>false</organismsDiffer>
    <experiments>3</experiments>
</comment>
<comment type="interaction">
    <interactant intactId="EBI-11603430">
        <id>Q6PL24</id>
    </interactant>
    <interactant intactId="EBI-3923617">
        <id>Q9H2K0</id>
        <label>MTIF3</label>
    </interactant>
    <organismsDiffer>false</organismsDiffer>
    <experiments>3</experiments>
</comment>
<comment type="interaction">
    <interactant intactId="EBI-11603430">
        <id>Q6PL24</id>
    </interactant>
    <interactant intactId="EBI-1246332">
        <id>Q9UI09</id>
        <label>NDUFA12</label>
    </interactant>
    <organismsDiffer>false</organismsDiffer>
    <experiments>3</experiments>
</comment>
<comment type="interaction">
    <interactant intactId="EBI-11603430">
        <id>Q6PL24</id>
    </interactant>
    <interactant intactId="EBI-14065960">
        <id>Q96HR9-2</id>
        <label>REEP6</label>
    </interactant>
    <organismsDiffer>false</organismsDiffer>
    <experiments>3</experiments>
</comment>
<comment type="interaction">
    <interactant intactId="EBI-11603430">
        <id>Q6PL24</id>
    </interactant>
    <interactant intactId="EBI-749270">
        <id>Q8N6R1</id>
        <label>SERP2</label>
    </interactant>
    <organismsDiffer>false</organismsDiffer>
    <experiments>3</experiments>
</comment>
<comment type="interaction">
    <interactant intactId="EBI-11603430">
        <id>Q6PL24</id>
    </interactant>
    <interactant intactId="EBI-727240">
        <id>Q9UNK0</id>
        <label>STX8</label>
    </interactant>
    <organismsDiffer>false</organismsDiffer>
    <experiments>4</experiments>
</comment>
<comment type="interaction">
    <interactant intactId="EBI-11603430">
        <id>Q6PL24</id>
    </interactant>
    <interactant intactId="EBI-18194029">
        <id>Q96L08</id>
        <label>SUSD3</label>
    </interactant>
    <organismsDiffer>false</organismsDiffer>
    <experiments>3</experiments>
</comment>
<comment type="interaction">
    <interactant intactId="EBI-11603430">
        <id>Q6PL24</id>
    </interactant>
    <interactant intactId="EBI-8633987">
        <id>Q12893</id>
        <label>TMEM115</label>
    </interactant>
    <organismsDiffer>false</organismsDiffer>
    <experiments>3</experiments>
</comment>
<comment type="interaction">
    <interactant intactId="EBI-11603430">
        <id>Q6PL24</id>
    </interactant>
    <interactant intactId="EBI-12155101">
        <id>Q9BTD3</id>
        <label>TMEM121</label>
    </interactant>
    <organismsDiffer>false</organismsDiffer>
    <experiments>3</experiments>
</comment>
<comment type="interaction">
    <interactant intactId="EBI-11603430">
        <id>Q6PL24</id>
    </interactant>
    <interactant intactId="EBI-10173151">
        <id>A2RU14</id>
        <label>TMEM218</label>
    </interactant>
    <organismsDiffer>false</organismsDiffer>
    <experiments>3</experiments>
</comment>
<comment type="interaction">
    <interactant intactId="EBI-11603430">
        <id>Q6PL24</id>
    </interactant>
    <interactant intactId="EBI-11956809">
        <id>Q8TBM7</id>
        <label>TMEM254</label>
    </interactant>
    <organismsDiffer>false</organismsDiffer>
    <experiments>3</experiments>
</comment>
<comment type="interaction">
    <interactant intactId="EBI-11603430">
        <id>Q6PL24</id>
    </interactant>
    <interactant intactId="EBI-11996766">
        <id>Q8N609</id>
        <label>TRAM1L1</label>
    </interactant>
    <organismsDiffer>false</organismsDiffer>
    <experiments>5</experiments>
</comment>
<comment type="interaction">
    <interactant intactId="EBI-11603430">
        <id>Q6PL24</id>
    </interactant>
    <interactant intactId="EBI-7601760">
        <id>Q53HI1</id>
        <label>UNC50</label>
    </interactant>
    <organismsDiffer>false</organismsDiffer>
    <experiments>3</experiments>
</comment>
<comment type="interaction">
    <interactant intactId="EBI-11603430">
        <id>Q6PL24</id>
    </interactant>
    <interactant intactId="EBI-11572692">
        <id>Q969W1</id>
        <label>ZDHHC16</label>
    </interactant>
    <organismsDiffer>false</organismsDiffer>
    <experiments>3</experiments>
</comment>
<comment type="sequence caution" evidence="3">
    <conflict type="erroneous gene model prediction">
        <sequence resource="EMBL-CDS" id="AAF62560"/>
    </conflict>
</comment>
<evidence type="ECO:0000255" key="1">
    <source>
        <dbReference type="PROSITE-ProRule" id="PRU00096"/>
    </source>
</evidence>
<evidence type="ECO:0000256" key="2">
    <source>
        <dbReference type="SAM" id="MobiDB-lite"/>
    </source>
</evidence>
<evidence type="ECO:0000305" key="3"/>
<evidence type="ECO:0007744" key="4">
    <source>
    </source>
</evidence>